<proteinExistence type="inferred from homology"/>
<reference key="1">
    <citation type="journal article" date="2000" name="Science">
        <title>Complete genome sequence of Neisseria meningitidis serogroup B strain MC58.</title>
        <authorList>
            <person name="Tettelin H."/>
            <person name="Saunders N.J."/>
            <person name="Heidelberg J.F."/>
            <person name="Jeffries A.C."/>
            <person name="Nelson K.E."/>
            <person name="Eisen J.A."/>
            <person name="Ketchum K.A."/>
            <person name="Hood D.W."/>
            <person name="Peden J.F."/>
            <person name="Dodson R.J."/>
            <person name="Nelson W.C."/>
            <person name="Gwinn M.L."/>
            <person name="DeBoy R.T."/>
            <person name="Peterson J.D."/>
            <person name="Hickey E.K."/>
            <person name="Haft D.H."/>
            <person name="Salzberg S.L."/>
            <person name="White O."/>
            <person name="Fleischmann R.D."/>
            <person name="Dougherty B.A."/>
            <person name="Mason T.M."/>
            <person name="Ciecko A."/>
            <person name="Parksey D.S."/>
            <person name="Blair E."/>
            <person name="Cittone H."/>
            <person name="Clark E.B."/>
            <person name="Cotton M.D."/>
            <person name="Utterback T.R."/>
            <person name="Khouri H.M."/>
            <person name="Qin H."/>
            <person name="Vamathevan J.J."/>
            <person name="Gill J."/>
            <person name="Scarlato V."/>
            <person name="Masignani V."/>
            <person name="Pizza M."/>
            <person name="Grandi G."/>
            <person name="Sun L."/>
            <person name="Smith H.O."/>
            <person name="Fraser C.M."/>
            <person name="Moxon E.R."/>
            <person name="Rappuoli R."/>
            <person name="Venter J.C."/>
        </authorList>
    </citation>
    <scope>NUCLEOTIDE SEQUENCE [LARGE SCALE GENOMIC DNA]</scope>
    <source>
        <strain>ATCC BAA-335 / MC58</strain>
    </source>
</reference>
<dbReference type="EMBL" id="AE002098">
    <property type="protein sequence ID" value="AAF41248.1"/>
    <property type="molecule type" value="Genomic_DNA"/>
</dbReference>
<dbReference type="PIR" id="E81153">
    <property type="entry name" value="E81153"/>
</dbReference>
<dbReference type="RefSeq" id="NP_273878.1">
    <property type="nucleotide sequence ID" value="NC_003112.2"/>
</dbReference>
<dbReference type="RefSeq" id="WP_002221161.1">
    <property type="nucleotide sequence ID" value="NC_003112.2"/>
</dbReference>
<dbReference type="SMR" id="Q9JZZ5"/>
<dbReference type="FunCoup" id="Q9JZZ5">
    <property type="interactions" value="184"/>
</dbReference>
<dbReference type="STRING" id="122586.NMB0837"/>
<dbReference type="PaxDb" id="122586-NMB0837"/>
<dbReference type="GeneID" id="93386341"/>
<dbReference type="KEGG" id="nme:NMB0837"/>
<dbReference type="PATRIC" id="fig|122586.8.peg.1049"/>
<dbReference type="HOGENOM" id="CLU_134358_1_0_4"/>
<dbReference type="InParanoid" id="Q9JZZ5"/>
<dbReference type="OrthoDB" id="9796121at2"/>
<dbReference type="Proteomes" id="UP000000425">
    <property type="component" value="Chromosome"/>
</dbReference>
<dbReference type="GO" id="GO:0030163">
    <property type="term" value="P:protein catabolic process"/>
    <property type="evidence" value="ECO:0007669"/>
    <property type="project" value="InterPro"/>
</dbReference>
<dbReference type="GO" id="GO:0006508">
    <property type="term" value="P:proteolysis"/>
    <property type="evidence" value="ECO:0007669"/>
    <property type="project" value="UniProtKB-UniRule"/>
</dbReference>
<dbReference type="FunFam" id="3.30.1390.10:FF:000002">
    <property type="entry name" value="ATP-dependent Clp protease adapter protein ClpS"/>
    <property type="match status" value="1"/>
</dbReference>
<dbReference type="Gene3D" id="3.30.1390.10">
    <property type="match status" value="1"/>
</dbReference>
<dbReference type="HAMAP" id="MF_00302">
    <property type="entry name" value="ClpS"/>
    <property type="match status" value="1"/>
</dbReference>
<dbReference type="InterPro" id="IPR022935">
    <property type="entry name" value="ClpS"/>
</dbReference>
<dbReference type="InterPro" id="IPR003769">
    <property type="entry name" value="ClpS_core"/>
</dbReference>
<dbReference type="InterPro" id="IPR014719">
    <property type="entry name" value="Ribosomal_bL12_C/ClpS-like"/>
</dbReference>
<dbReference type="NCBIfam" id="NF000672">
    <property type="entry name" value="PRK00033.1-5"/>
    <property type="match status" value="1"/>
</dbReference>
<dbReference type="PANTHER" id="PTHR33473:SF19">
    <property type="entry name" value="ATP-DEPENDENT CLP PROTEASE ADAPTER PROTEIN CLPS"/>
    <property type="match status" value="1"/>
</dbReference>
<dbReference type="PANTHER" id="PTHR33473">
    <property type="entry name" value="ATP-DEPENDENT CLP PROTEASE ADAPTER PROTEIN CLPS1, CHLOROPLASTIC"/>
    <property type="match status" value="1"/>
</dbReference>
<dbReference type="Pfam" id="PF02617">
    <property type="entry name" value="ClpS"/>
    <property type="match status" value="1"/>
</dbReference>
<dbReference type="SUPFAM" id="SSF54736">
    <property type="entry name" value="ClpS-like"/>
    <property type="match status" value="1"/>
</dbReference>
<sequence length="100" mass="11411">MTAQHQSDTLLHRLNTLPPKRYGVFLLNDDYTTMEFVVEILTEIFMLGQEQAVAVMLLVHHEGKGLCGTYTRDIAQTKQQQVMQRAKAEGHPLQCIVEEI</sequence>
<organism>
    <name type="scientific">Neisseria meningitidis serogroup B (strain ATCC BAA-335 / MC58)</name>
    <dbReference type="NCBI Taxonomy" id="122586"/>
    <lineage>
        <taxon>Bacteria</taxon>
        <taxon>Pseudomonadati</taxon>
        <taxon>Pseudomonadota</taxon>
        <taxon>Betaproteobacteria</taxon>
        <taxon>Neisseriales</taxon>
        <taxon>Neisseriaceae</taxon>
        <taxon>Neisseria</taxon>
    </lineage>
</organism>
<accession>Q9JZZ5</accession>
<keyword id="KW-1185">Reference proteome</keyword>
<gene>
    <name evidence="1" type="primary">clpS</name>
    <name type="ordered locus">NMB0837</name>
</gene>
<feature type="chain" id="PRO_0000215729" description="ATP-dependent Clp protease adapter protein ClpS">
    <location>
        <begin position="1"/>
        <end position="100"/>
    </location>
</feature>
<evidence type="ECO:0000255" key="1">
    <source>
        <dbReference type="HAMAP-Rule" id="MF_00302"/>
    </source>
</evidence>
<protein>
    <recommendedName>
        <fullName evidence="1">ATP-dependent Clp protease adapter protein ClpS</fullName>
    </recommendedName>
</protein>
<comment type="function">
    <text evidence="1">Involved in the modulation of the specificity of the ClpAP-mediated ATP-dependent protein degradation.</text>
</comment>
<comment type="subunit">
    <text evidence="1">Binds to the N-terminal domain of the chaperone ClpA.</text>
</comment>
<comment type="similarity">
    <text evidence="1">Belongs to the ClpS family.</text>
</comment>
<name>CLPS_NEIMB</name>